<protein>
    <recommendedName>
        <fullName>RNA-directed RNA polymerase VP2</fullName>
        <ecNumber>2.7.7.48</ecNumber>
    </recommendedName>
</protein>
<gene>
    <name type="primary">S2</name>
</gene>
<sequence>MSRKLGSNAPTPMHLRLGNRYETIEQLFNKTRDINRPNKQQDVEIANTQETQWMHACKLALDLATEEQFERAVSIVKEWSIEDRKHDNPTESSYFPVIIRSSKEAEFPFKERSAVLTQYGMDALLEARLNDPSGKRGVDAEESKLGFINIETMNVKINGDYVTVNGVDLPKWSADNDASAKVGVTCSEAWFGARDARWTEACRHLPFSLASTYVTWLMLLTEQAAGNDKFNIDGHGFTNLLTGLIYLASEWATRTSKSRLKKNVDIKGRVLLESWIKGNPPAIPSWMDDWGKPMKYKYVTESDVGIKPHNDKGLAEWSKEAQLRNTPEGADTESLLRSRIPFTEADSGPPYITDSALTTSGPLRAFLCYSTAVECCGSIHLRGFTEYYKCVLHYLGTQPGKIGKQISKVSSPVARALGATSKEVMVPRRVQPSEHVWCDETDCVTVKFEDNYVLQLMCASYDIPTNWESLENKMFENELMGHCLRHIYDEYKHEHVNIHNSDLFDVITHLTNAGSAEGYVRSCLATLPVDGYMSHMKRIALEGIDSSEDKEVSQYERVHWDAIMRTILPPTPEGAVQELKALSNSRSGGADRIRFKSDRNTALANSDRETDAPFVMSSNRKNSTIAMAAHLILNPVTLKHRSSYEVPLPTGIRSVPARILRLIYNMPLPMQSLLQPLYKAMKAYMKRPTHNERYQLALNKGVVVHDSRTLINNSINCVHNPRLVSIADDASKLDQHEGPRARNVLIDALEAIPIDNGFADEFGDSYTDLMRNMLAGWNTNYFAFNVDAEQKQVMSVDTDPSGALITAEKNTVTSAGIQDMIIARTNIPQRDYLWGDDAYAMLTIPDDRNIVELIREREVIATDAGQVMDTLNGSWSGRGVHFLQVYTLWGQRMKRRTAIDHENPARYSMGDSGSLLTKYVMMGTRGGGIQMTNMLILSTIIQASRFKVFGRQFFLPFPTIAAPGGHVNMILTGFPAPNSKLWLSTNYHHIMPQHVKDRGVIKRPAVDQPEHIGARLLSEKDTLEVKVTIGGAVAQDAEGNLPTAGDLMKRAHRKLREQTRHDLYKKNKHKFLNWALTADVDLGDYSKLAYSRSTQGAAEKAIGTQTAEKHLKKWFDEKAMVRAGLISVARGAADAPIPEETESLLLNDTMHVGKVRIAWRFDNDIYLKFKHDEKHNILLFNKAMNPVKEYKYRWHPFWSQPKCMKMLLAYTGVHARPNVLTIKDLTAKFSPHRFRADLHAEDIMGLLKKVPTHMQAQALSFVGFDSHEIEEMQKHIPKIHLYEDLSELDDYSGMDDSVKCAELDRITEFLQMVMSDATYGILDDPESPELRSAVHVQFVSLLADEFNVSYACACSNEIRIRLPIPELSYDV</sequence>
<dbReference type="EC" id="2.7.7.48"/>
<dbReference type="EMBL" id="DQ126102">
    <property type="protein sequence ID" value="AAZ94042.1"/>
    <property type="molecule type" value="Genomic_RNA"/>
</dbReference>
<dbReference type="RefSeq" id="YP_654545.1">
    <property type="nucleotide sequence ID" value="NC_008172.1"/>
</dbReference>
<dbReference type="KEGG" id="vg:5076664"/>
<dbReference type="Proteomes" id="UP000000349">
    <property type="component" value="Genome"/>
</dbReference>
<dbReference type="GO" id="GO:0044423">
    <property type="term" value="C:virion component"/>
    <property type="evidence" value="ECO:0007669"/>
    <property type="project" value="UniProtKB-KW"/>
</dbReference>
<dbReference type="GO" id="GO:0016787">
    <property type="term" value="F:hydrolase activity"/>
    <property type="evidence" value="ECO:0007669"/>
    <property type="project" value="UniProtKB-KW"/>
</dbReference>
<dbReference type="GO" id="GO:0000166">
    <property type="term" value="F:nucleotide binding"/>
    <property type="evidence" value="ECO:0007669"/>
    <property type="project" value="UniProtKB-KW"/>
</dbReference>
<dbReference type="GO" id="GO:0003968">
    <property type="term" value="F:RNA-directed RNA polymerase activity"/>
    <property type="evidence" value="ECO:0007669"/>
    <property type="project" value="UniProtKB-KW"/>
</dbReference>
<comment type="function">
    <text evidence="1">RNA-directed RNA polymerase that is involved in transcription and genome replication. Following infection, it catalyzes the synthesis of fully conservative plus strands. After core assembly, which consists in recruitment of one capped plus-strand for each genomic segments and polymerase complexes, the polymerase switches mode and catalyzes the synthesis of complementary minus-strands (By similarity).</text>
</comment>
<comment type="catalytic activity">
    <reaction>
        <text>RNA(n) + a ribonucleoside 5'-triphosphate = RNA(n+1) + diphosphate</text>
        <dbReference type="Rhea" id="RHEA:21248"/>
        <dbReference type="Rhea" id="RHEA-COMP:14527"/>
        <dbReference type="Rhea" id="RHEA-COMP:17342"/>
        <dbReference type="ChEBI" id="CHEBI:33019"/>
        <dbReference type="ChEBI" id="CHEBI:61557"/>
        <dbReference type="ChEBI" id="CHEBI:140395"/>
        <dbReference type="EC" id="2.7.7.48"/>
    </reaction>
</comment>
<comment type="subcellular location">
    <subcellularLocation>
        <location evidence="2">Virion</location>
    </subcellularLocation>
</comment>
<comment type="similarity">
    <text evidence="2">Belongs to the reoviridae RNA-directed RNA polymerase family.</text>
</comment>
<accession>Q1I0V0</accession>
<organismHost>
    <name type="scientific">Micromonas pusilla</name>
    <name type="common">Picoplanktonic green alga</name>
    <name type="synonym">Chromulina pusilla</name>
    <dbReference type="NCBI Taxonomy" id="38833"/>
</organismHost>
<feature type="chain" id="PRO_0000404160" description="RNA-directed RNA polymerase VP2">
    <location>
        <begin position="1"/>
        <end position="1371"/>
    </location>
</feature>
<proteinExistence type="inferred from homology"/>
<keyword id="KW-0378">Hydrolase</keyword>
<keyword id="KW-0547">Nucleotide-binding</keyword>
<keyword id="KW-0548">Nucleotidyltransferase</keyword>
<keyword id="KW-1185">Reference proteome</keyword>
<keyword id="KW-0696">RNA-directed RNA polymerase</keyword>
<keyword id="KW-0808">Transferase</keyword>
<keyword id="KW-0693">Viral RNA replication</keyword>
<keyword id="KW-0946">Virion</keyword>
<evidence type="ECO:0000250" key="1"/>
<evidence type="ECO:0000305" key="2"/>
<reference key="1">
    <citation type="journal article" date="2006" name="J. Gen. Virol.">
        <title>Micromonas pusilla reovirus: a new member of the family Reoviridae assigned to a novel proposed genus (Mimoreovirus).</title>
        <authorList>
            <person name="Attoui H."/>
            <person name="Jaafar F.M."/>
            <person name="Belhouchet M."/>
            <person name="de Micco P."/>
            <person name="de Lamballerie X."/>
            <person name="Brussaard C.P."/>
        </authorList>
    </citation>
    <scope>NUCLEOTIDE SEQUENCE [GENOMIC RNA]</scope>
</reference>
<organism>
    <name type="scientific">Micromonas pusilla reovirus (isolate Netherlands/2005)</name>
    <name type="common">MpRV</name>
    <dbReference type="NCBI Taxonomy" id="649596"/>
    <lineage>
        <taxon>Viruses</taxon>
        <taxon>Riboviria</taxon>
        <taxon>Orthornavirae</taxon>
        <taxon>Duplornaviricota</taxon>
        <taxon>Resentoviricetes</taxon>
        <taxon>Reovirales</taxon>
        <taxon>Sedoreoviridae</taxon>
        <taxon>Mimoreovirus</taxon>
        <taxon>Micromonas pusilla reovirus</taxon>
    </lineage>
</organism>
<name>RDRP_MPRVN</name>